<protein>
    <recommendedName>
        <fullName>HTH-type transcriptional regulator MalR</fullName>
    </recommendedName>
    <alternativeName>
        <fullName>Maltose operon transcriptional repressor</fullName>
    </alternativeName>
</protein>
<reference key="1">
    <citation type="journal article" date="1997" name="Mol. Microbiol.">
        <title>Substrate induction and glucose repression of maltose utilization by Streptomyces coelicolor A3(2) is controlled by malR, a member of the lacl-galR family of regulatory genes.</title>
        <authorList>
            <person name="van Wezel G.P."/>
            <person name="White J."/>
            <person name="Young P."/>
            <person name="Postma P.W."/>
            <person name="Bibb M.J."/>
        </authorList>
    </citation>
    <scope>NUCLEOTIDE SEQUENCE [GENOMIC DNA]</scope>
    <source>
        <strain>A3(2) / NRRL B-16638</strain>
    </source>
</reference>
<reference key="2">
    <citation type="journal article" date="2002" name="Nature">
        <title>Complete genome sequence of the model actinomycete Streptomyces coelicolor A3(2).</title>
        <authorList>
            <person name="Bentley S.D."/>
            <person name="Chater K.F."/>
            <person name="Cerdeno-Tarraga A.-M."/>
            <person name="Challis G.L."/>
            <person name="Thomson N.R."/>
            <person name="James K.D."/>
            <person name="Harris D.E."/>
            <person name="Quail M.A."/>
            <person name="Kieser H."/>
            <person name="Harper D."/>
            <person name="Bateman A."/>
            <person name="Brown S."/>
            <person name="Chandra G."/>
            <person name="Chen C.W."/>
            <person name="Collins M."/>
            <person name="Cronin A."/>
            <person name="Fraser A."/>
            <person name="Goble A."/>
            <person name="Hidalgo J."/>
            <person name="Hornsby T."/>
            <person name="Howarth S."/>
            <person name="Huang C.-H."/>
            <person name="Kieser T."/>
            <person name="Larke L."/>
            <person name="Murphy L.D."/>
            <person name="Oliver K."/>
            <person name="O'Neil S."/>
            <person name="Rabbinowitsch E."/>
            <person name="Rajandream M.A."/>
            <person name="Rutherford K.M."/>
            <person name="Rutter S."/>
            <person name="Seeger K."/>
            <person name="Saunders D."/>
            <person name="Sharp S."/>
            <person name="Squares R."/>
            <person name="Squares S."/>
            <person name="Taylor K."/>
            <person name="Warren T."/>
            <person name="Wietzorrek A."/>
            <person name="Woodward J.R."/>
            <person name="Barrell B.G."/>
            <person name="Parkhill J."/>
            <person name="Hopwood D.A."/>
        </authorList>
    </citation>
    <scope>NUCLEOTIDE SEQUENCE [LARGE SCALE GENOMIC DNA]</scope>
    <source>
        <strain>ATCC BAA-471 / A3(2) / M145</strain>
    </source>
</reference>
<name>MALR_STRCO</name>
<evidence type="ECO:0000255" key="1">
    <source>
        <dbReference type="PROSITE-ProRule" id="PRU00111"/>
    </source>
</evidence>
<organism>
    <name type="scientific">Streptomyces coelicolor (strain ATCC BAA-471 / A3(2) / M145)</name>
    <dbReference type="NCBI Taxonomy" id="100226"/>
    <lineage>
        <taxon>Bacteria</taxon>
        <taxon>Bacillati</taxon>
        <taxon>Actinomycetota</taxon>
        <taxon>Actinomycetes</taxon>
        <taxon>Kitasatosporales</taxon>
        <taxon>Streptomycetaceae</taxon>
        <taxon>Streptomyces</taxon>
        <taxon>Streptomyces albidoflavus group</taxon>
    </lineage>
</organism>
<feature type="chain" id="PRO_0000107970" description="HTH-type transcriptional regulator MalR">
    <location>
        <begin position="1"/>
        <end position="344"/>
    </location>
</feature>
<feature type="domain" description="HTH lacI-type" evidence="1">
    <location>
        <begin position="1"/>
        <end position="54"/>
    </location>
</feature>
<feature type="DNA-binding region" description="H-T-H motif" evidence="1">
    <location>
        <begin position="5"/>
        <end position="24"/>
    </location>
</feature>
<comment type="function">
    <text>Transcriptional repressor of the maltosaccharide utilization operon malEFG.</text>
</comment>
<gene>
    <name type="primary">malR</name>
    <name type="ordered locus">SCO2232</name>
    <name type="ORF">SC10B7.27</name>
</gene>
<accession>P72396</accession>
<dbReference type="EMBL" id="Y07706">
    <property type="protein sequence ID" value="CAA68975.1"/>
    <property type="molecule type" value="Genomic_DNA"/>
</dbReference>
<dbReference type="EMBL" id="AL939111">
    <property type="protein sequence ID" value="CAB90880.1"/>
    <property type="molecule type" value="Genomic_DNA"/>
</dbReference>
<dbReference type="RefSeq" id="NP_626483.1">
    <property type="nucleotide sequence ID" value="NC_003888.3"/>
</dbReference>
<dbReference type="RefSeq" id="WP_003976582.1">
    <property type="nucleotide sequence ID" value="NZ_VNID01000001.1"/>
</dbReference>
<dbReference type="SMR" id="P72396"/>
<dbReference type="STRING" id="100226.gene:17759829"/>
<dbReference type="PaxDb" id="100226-SCO2232"/>
<dbReference type="KEGG" id="sco:SCO2232"/>
<dbReference type="PATRIC" id="fig|100226.15.peg.2269"/>
<dbReference type="eggNOG" id="COG1609">
    <property type="taxonomic scope" value="Bacteria"/>
</dbReference>
<dbReference type="HOGENOM" id="CLU_037628_6_4_11"/>
<dbReference type="InParanoid" id="P72396"/>
<dbReference type="OrthoDB" id="3324394at2"/>
<dbReference type="PhylomeDB" id="P72396"/>
<dbReference type="Proteomes" id="UP000001973">
    <property type="component" value="Chromosome"/>
</dbReference>
<dbReference type="GO" id="GO:0003700">
    <property type="term" value="F:DNA-binding transcription factor activity"/>
    <property type="evidence" value="ECO:0000318"/>
    <property type="project" value="GO_Central"/>
</dbReference>
<dbReference type="GO" id="GO:0000976">
    <property type="term" value="F:transcription cis-regulatory region binding"/>
    <property type="evidence" value="ECO:0000318"/>
    <property type="project" value="GO_Central"/>
</dbReference>
<dbReference type="GO" id="GO:0006355">
    <property type="term" value="P:regulation of DNA-templated transcription"/>
    <property type="evidence" value="ECO:0000318"/>
    <property type="project" value="GO_Central"/>
</dbReference>
<dbReference type="CDD" id="cd01392">
    <property type="entry name" value="HTH_LacI"/>
    <property type="match status" value="1"/>
</dbReference>
<dbReference type="CDD" id="cd06292">
    <property type="entry name" value="PBP1_AglR_RafR-like"/>
    <property type="match status" value="1"/>
</dbReference>
<dbReference type="Gene3D" id="3.40.50.2300">
    <property type="match status" value="2"/>
</dbReference>
<dbReference type="Gene3D" id="1.10.260.40">
    <property type="entry name" value="lambda repressor-like DNA-binding domains"/>
    <property type="match status" value="1"/>
</dbReference>
<dbReference type="InterPro" id="IPR000843">
    <property type="entry name" value="HTH_LacI"/>
</dbReference>
<dbReference type="InterPro" id="IPR046335">
    <property type="entry name" value="LacI/GalR-like_sensor"/>
</dbReference>
<dbReference type="InterPro" id="IPR010982">
    <property type="entry name" value="Lambda_DNA-bd_dom_sf"/>
</dbReference>
<dbReference type="InterPro" id="IPR028082">
    <property type="entry name" value="Peripla_BP_I"/>
</dbReference>
<dbReference type="PANTHER" id="PTHR30146">
    <property type="entry name" value="LACI-RELATED TRANSCRIPTIONAL REPRESSOR"/>
    <property type="match status" value="1"/>
</dbReference>
<dbReference type="PANTHER" id="PTHR30146:SF153">
    <property type="entry name" value="LACTOSE OPERON REPRESSOR"/>
    <property type="match status" value="1"/>
</dbReference>
<dbReference type="Pfam" id="PF00356">
    <property type="entry name" value="LacI"/>
    <property type="match status" value="1"/>
</dbReference>
<dbReference type="Pfam" id="PF13377">
    <property type="entry name" value="Peripla_BP_3"/>
    <property type="match status" value="1"/>
</dbReference>
<dbReference type="PRINTS" id="PR00036">
    <property type="entry name" value="HTHLACI"/>
</dbReference>
<dbReference type="SMART" id="SM00354">
    <property type="entry name" value="HTH_LACI"/>
    <property type="match status" value="1"/>
</dbReference>
<dbReference type="SUPFAM" id="SSF47413">
    <property type="entry name" value="lambda repressor-like DNA-binding domains"/>
    <property type="match status" value="1"/>
</dbReference>
<dbReference type="SUPFAM" id="SSF53822">
    <property type="entry name" value="Periplasmic binding protein-like I"/>
    <property type="match status" value="1"/>
</dbReference>
<dbReference type="PROSITE" id="PS00356">
    <property type="entry name" value="HTH_LACI_1"/>
    <property type="match status" value="1"/>
</dbReference>
<dbReference type="PROSITE" id="PS50932">
    <property type="entry name" value="HTH_LACI_2"/>
    <property type="match status" value="1"/>
</dbReference>
<sequence>MTTRLADIAAQAGVSEATVSRVLNGKPGVAATTRQSVLAALDVLGYERPVRLRQRSEGLVGLITPELENPIFPALAQVIGQALTRQGYTPVLATQTPGGSTEDELTEMLVDRGVAGIIYVSGLHADTTADMQRYERLRAQGVPFVLVDGFSSQVQAPFISPDDRAAMSLAVTHLVSLGHTRIGLALGPKRFVPVQRKIEGFVRTVQDQLGLSAETVEKELVQHSLYTLEGGQAAASALIGRDCTAVVCASDMMALGAIRAARQLGLDVPKDVSVVGFDDSPLIAFTDPPLTTVRKPVPAMGQAAVRTLLEEIGGTPAPHSEFVFMPELVVRGSTASAPGERGRP</sequence>
<proteinExistence type="predicted"/>
<keyword id="KW-0238">DNA-binding</keyword>
<keyword id="KW-1185">Reference proteome</keyword>
<keyword id="KW-0678">Repressor</keyword>
<keyword id="KW-0804">Transcription</keyword>
<keyword id="KW-0805">Transcription regulation</keyword>